<accession>A1JHR0</accession>
<feature type="chain" id="PRO_1000017974" description="Aspartate--ammonia ligase">
    <location>
        <begin position="1"/>
        <end position="330"/>
    </location>
</feature>
<name>ASNA_YERE8</name>
<dbReference type="EC" id="6.3.1.1" evidence="1"/>
<dbReference type="EMBL" id="AM286415">
    <property type="protein sequence ID" value="CAL10148.1"/>
    <property type="molecule type" value="Genomic_DNA"/>
</dbReference>
<dbReference type="RefSeq" id="WP_011815250.1">
    <property type="nucleotide sequence ID" value="NC_008800.1"/>
</dbReference>
<dbReference type="RefSeq" id="YP_001004400.1">
    <property type="nucleotide sequence ID" value="NC_008800.1"/>
</dbReference>
<dbReference type="SMR" id="A1JHR0"/>
<dbReference type="KEGG" id="yen:YE0003"/>
<dbReference type="PATRIC" id="fig|393305.7.peg.92"/>
<dbReference type="eggNOG" id="COG2502">
    <property type="taxonomic scope" value="Bacteria"/>
</dbReference>
<dbReference type="HOGENOM" id="CLU_071543_0_0_6"/>
<dbReference type="OrthoDB" id="3185462at2"/>
<dbReference type="UniPathway" id="UPA00134">
    <property type="reaction ID" value="UER00194"/>
</dbReference>
<dbReference type="Proteomes" id="UP000000642">
    <property type="component" value="Chromosome"/>
</dbReference>
<dbReference type="GO" id="GO:0005829">
    <property type="term" value="C:cytosol"/>
    <property type="evidence" value="ECO:0007669"/>
    <property type="project" value="TreeGrafter"/>
</dbReference>
<dbReference type="GO" id="GO:0004071">
    <property type="term" value="F:aspartate-ammonia ligase activity"/>
    <property type="evidence" value="ECO:0007669"/>
    <property type="project" value="UniProtKB-UniRule"/>
</dbReference>
<dbReference type="GO" id="GO:0005524">
    <property type="term" value="F:ATP binding"/>
    <property type="evidence" value="ECO:0007669"/>
    <property type="project" value="UniProtKB-UniRule"/>
</dbReference>
<dbReference type="GO" id="GO:0070981">
    <property type="term" value="P:L-asparagine biosynthetic process"/>
    <property type="evidence" value="ECO:0007669"/>
    <property type="project" value="UniProtKB-UniRule"/>
</dbReference>
<dbReference type="Gene3D" id="3.30.930.10">
    <property type="entry name" value="Bira Bifunctional Protein, Domain 2"/>
    <property type="match status" value="1"/>
</dbReference>
<dbReference type="HAMAP" id="MF_00555">
    <property type="entry name" value="AsnA"/>
    <property type="match status" value="1"/>
</dbReference>
<dbReference type="InterPro" id="IPR006195">
    <property type="entry name" value="aa-tRNA-synth_II"/>
</dbReference>
<dbReference type="InterPro" id="IPR045864">
    <property type="entry name" value="aa-tRNA-synth_II/BPL/LPL"/>
</dbReference>
<dbReference type="InterPro" id="IPR004618">
    <property type="entry name" value="AsnA"/>
</dbReference>
<dbReference type="NCBIfam" id="TIGR00669">
    <property type="entry name" value="asnA"/>
    <property type="match status" value="1"/>
</dbReference>
<dbReference type="PANTHER" id="PTHR30073">
    <property type="entry name" value="ASPARTATE--AMMONIA LIGASE"/>
    <property type="match status" value="1"/>
</dbReference>
<dbReference type="PANTHER" id="PTHR30073:SF5">
    <property type="entry name" value="ASPARTATE--AMMONIA LIGASE"/>
    <property type="match status" value="1"/>
</dbReference>
<dbReference type="Pfam" id="PF03590">
    <property type="entry name" value="AsnA"/>
    <property type="match status" value="1"/>
</dbReference>
<dbReference type="PIRSF" id="PIRSF001555">
    <property type="entry name" value="Asp_ammon_ligase"/>
    <property type="match status" value="1"/>
</dbReference>
<dbReference type="SUPFAM" id="SSF55681">
    <property type="entry name" value="Class II aaRS and biotin synthetases"/>
    <property type="match status" value="1"/>
</dbReference>
<dbReference type="PROSITE" id="PS50862">
    <property type="entry name" value="AA_TRNA_LIGASE_II"/>
    <property type="match status" value="1"/>
</dbReference>
<evidence type="ECO:0000255" key="1">
    <source>
        <dbReference type="HAMAP-Rule" id="MF_00555"/>
    </source>
</evidence>
<comment type="catalytic activity">
    <reaction evidence="1">
        <text>L-aspartate + NH4(+) + ATP = L-asparagine + AMP + diphosphate + H(+)</text>
        <dbReference type="Rhea" id="RHEA:11372"/>
        <dbReference type="ChEBI" id="CHEBI:15378"/>
        <dbReference type="ChEBI" id="CHEBI:28938"/>
        <dbReference type="ChEBI" id="CHEBI:29991"/>
        <dbReference type="ChEBI" id="CHEBI:30616"/>
        <dbReference type="ChEBI" id="CHEBI:33019"/>
        <dbReference type="ChEBI" id="CHEBI:58048"/>
        <dbReference type="ChEBI" id="CHEBI:456215"/>
        <dbReference type="EC" id="6.3.1.1"/>
    </reaction>
</comment>
<comment type="pathway">
    <text evidence="1">Amino-acid biosynthesis; L-asparagine biosynthesis; L-asparagine from L-aspartate (ammonia route): step 1/1.</text>
</comment>
<comment type="subcellular location">
    <subcellularLocation>
        <location evidence="1">Cytoplasm</location>
    </subcellularLocation>
</comment>
<comment type="similarity">
    <text evidence="1">Belongs to the class-II aminoacyl-tRNA synthetase family. AsnA subfamily.</text>
</comment>
<keyword id="KW-0028">Amino-acid biosynthesis</keyword>
<keyword id="KW-0061">Asparagine biosynthesis</keyword>
<keyword id="KW-0067">ATP-binding</keyword>
<keyword id="KW-0963">Cytoplasm</keyword>
<keyword id="KW-0436">Ligase</keyword>
<keyword id="KW-0547">Nucleotide-binding</keyword>
<gene>
    <name evidence="1" type="primary">asnA</name>
    <name type="ordered locus">YE0003</name>
</gene>
<sequence length="330" mass="36855">MKKQFIQKQQQISFVKSFFSRQLEQQLGLIEVQAPILSRVGDGTQDNLSGSEKAVQVKVKSLPDATFEVVHSLAKWKRKTLGRFDFGADQGIYTHMKALRPDEDRLSAIHSVYVDQWDWERVMGDGERNLAYLKSTVNKIYAAIKETEAAISAEFDIKPFLPEQIHFIHSESLRAKFPDLDAKGRERAIAKELGAVFLIGIGGKLADGKSHDVRAPDYDDWTSPSAEGFAGLNGDIIVWNPVLEDAFEISSMGIRVDAEALKRQLALTSDEDRLKLEWHQSLLNGEMPQTIGGGIGQSRLVMLLLQQQHIGQVQCGVWGPEISEKVEGLL</sequence>
<reference key="1">
    <citation type="journal article" date="2006" name="PLoS Genet.">
        <title>The complete genome sequence and comparative genome analysis of the high pathogenicity Yersinia enterocolitica strain 8081.</title>
        <authorList>
            <person name="Thomson N.R."/>
            <person name="Howard S."/>
            <person name="Wren B.W."/>
            <person name="Holden M.T.G."/>
            <person name="Crossman L."/>
            <person name="Challis G.L."/>
            <person name="Churcher C."/>
            <person name="Mungall K."/>
            <person name="Brooks K."/>
            <person name="Chillingworth T."/>
            <person name="Feltwell T."/>
            <person name="Abdellah Z."/>
            <person name="Hauser H."/>
            <person name="Jagels K."/>
            <person name="Maddison M."/>
            <person name="Moule S."/>
            <person name="Sanders M."/>
            <person name="Whitehead S."/>
            <person name="Quail M.A."/>
            <person name="Dougan G."/>
            <person name="Parkhill J."/>
            <person name="Prentice M.B."/>
        </authorList>
    </citation>
    <scope>NUCLEOTIDE SEQUENCE [LARGE SCALE GENOMIC DNA]</scope>
    <source>
        <strain>NCTC 13174 / 8081</strain>
    </source>
</reference>
<proteinExistence type="inferred from homology"/>
<protein>
    <recommendedName>
        <fullName evidence="1">Aspartate--ammonia ligase</fullName>
        <ecNumber evidence="1">6.3.1.1</ecNumber>
    </recommendedName>
    <alternativeName>
        <fullName evidence="1">Asparagine synthetase A</fullName>
    </alternativeName>
</protein>
<organism>
    <name type="scientific">Yersinia enterocolitica serotype O:8 / biotype 1B (strain NCTC 13174 / 8081)</name>
    <dbReference type="NCBI Taxonomy" id="393305"/>
    <lineage>
        <taxon>Bacteria</taxon>
        <taxon>Pseudomonadati</taxon>
        <taxon>Pseudomonadota</taxon>
        <taxon>Gammaproteobacteria</taxon>
        <taxon>Enterobacterales</taxon>
        <taxon>Yersiniaceae</taxon>
        <taxon>Yersinia</taxon>
    </lineage>
</organism>